<keyword id="KW-0648">Protein biosynthesis</keyword>
<keyword id="KW-0663">Pyridoxal phosphate</keyword>
<keyword id="KW-1185">Reference proteome</keyword>
<keyword id="KW-0808">Transferase</keyword>
<reference key="1">
    <citation type="journal article" date="2015" name="Microbiology">
        <title>Genome of Methanoregula boonei 6A8 reveals adaptations to oligotrophic peatland environments.</title>
        <authorList>
            <person name="Braeuer S."/>
            <person name="Cadillo-Quiroz H."/>
            <person name="Kyrpides N."/>
            <person name="Woyke T."/>
            <person name="Goodwin L."/>
            <person name="Detter C."/>
            <person name="Podell S."/>
            <person name="Yavitt J.B."/>
            <person name="Zinder S.H."/>
        </authorList>
    </citation>
    <scope>NUCLEOTIDE SEQUENCE [LARGE SCALE GENOMIC DNA]</scope>
    <source>
        <strain>DSM 21154 / JCM 14090 / 6A8</strain>
    </source>
</reference>
<comment type="function">
    <text evidence="1">Converts O-phospho-L-seryl-tRNA(Cys) (Sep-tRNA(Cys)) to L-cysteinyl-tRNA(Cys) (Cys-tRNA(Cys)).</text>
</comment>
<comment type="catalytic activity">
    <reaction evidence="1">
        <text>O-phospho-L-seryl-tRNA(Cys) + hydrogen sulfide + H(+) = L-cysteinyl-tRNA(Cys) + phosphate</text>
        <dbReference type="Rhea" id="RHEA:25686"/>
        <dbReference type="Rhea" id="RHEA-COMP:9679"/>
        <dbReference type="Rhea" id="RHEA-COMP:9719"/>
        <dbReference type="ChEBI" id="CHEBI:15378"/>
        <dbReference type="ChEBI" id="CHEBI:29919"/>
        <dbReference type="ChEBI" id="CHEBI:43474"/>
        <dbReference type="ChEBI" id="CHEBI:78517"/>
        <dbReference type="ChEBI" id="CHEBI:78551"/>
        <dbReference type="EC" id="2.5.1.73"/>
    </reaction>
</comment>
<comment type="cofactor">
    <cofactor evidence="1">
        <name>pyridoxal 5'-phosphate</name>
        <dbReference type="ChEBI" id="CHEBI:597326"/>
    </cofactor>
</comment>
<comment type="subunit">
    <text evidence="1">Homodimer. Interacts with SepRS.</text>
</comment>
<comment type="similarity">
    <text evidence="1">Belongs to the SepCysS family.</text>
</comment>
<gene>
    <name type="ordered locus">Mboo_2045</name>
</gene>
<name>SPSS2_METB6</name>
<protein>
    <recommendedName>
        <fullName evidence="1">O-phospho-L-seryl-tRNA:Cys-tRNA synthase 2</fullName>
        <ecNumber evidence="1">2.5.1.73</ecNumber>
    </recommendedName>
    <alternativeName>
        <fullName evidence="1">Sep-tRNA:Cys-tRNA synthase 2</fullName>
        <shortName evidence="1">SepCysS 2</shortName>
    </alternativeName>
</protein>
<organism>
    <name type="scientific">Methanoregula boonei (strain DSM 21154 / JCM 14090 / 6A8)</name>
    <dbReference type="NCBI Taxonomy" id="456442"/>
    <lineage>
        <taxon>Archaea</taxon>
        <taxon>Methanobacteriati</taxon>
        <taxon>Methanobacteriota</taxon>
        <taxon>Stenosarchaea group</taxon>
        <taxon>Methanomicrobia</taxon>
        <taxon>Methanomicrobiales</taxon>
        <taxon>Methanoregulaceae</taxon>
        <taxon>Methanoregula</taxon>
    </lineage>
</organism>
<evidence type="ECO:0000255" key="1">
    <source>
        <dbReference type="HAMAP-Rule" id="MF_01675"/>
    </source>
</evidence>
<accession>A7I9Z8</accession>
<proteinExistence type="inferred from homology"/>
<feature type="chain" id="PRO_0000359458" description="O-phospho-L-seryl-tRNA:Cys-tRNA synthase 2">
    <location>
        <begin position="1"/>
        <end position="454"/>
    </location>
</feature>
<feature type="binding site" evidence="1">
    <location>
        <begin position="146"/>
        <end position="147"/>
    </location>
    <ligand>
        <name>pyridoxal 5'-phosphate</name>
        <dbReference type="ChEBI" id="CHEBI:597326"/>
    </ligand>
</feature>
<feature type="binding site" evidence="1">
    <location>
        <position position="251"/>
    </location>
    <ligand>
        <name>pyridoxal 5'-phosphate</name>
        <dbReference type="ChEBI" id="CHEBI:597326"/>
    </ligand>
</feature>
<feature type="binding site" evidence="1">
    <location>
        <begin position="274"/>
        <end position="276"/>
    </location>
    <ligand>
        <name>pyridoxal 5'-phosphate</name>
        <dbReference type="ChEBI" id="CHEBI:597326"/>
    </ligand>
</feature>
<feature type="modified residue" description="N6-(pyridoxal phosphate)lysine" evidence="1">
    <location>
        <position position="277"/>
    </location>
</feature>
<dbReference type="EC" id="2.5.1.73" evidence="1"/>
<dbReference type="EMBL" id="CP000780">
    <property type="protein sequence ID" value="ABS56559.1"/>
    <property type="molecule type" value="Genomic_DNA"/>
</dbReference>
<dbReference type="RefSeq" id="WP_012107615.1">
    <property type="nucleotide sequence ID" value="NC_009712.1"/>
</dbReference>
<dbReference type="SMR" id="A7I9Z8"/>
<dbReference type="STRING" id="456442.Mboo_2045"/>
<dbReference type="GeneID" id="5410678"/>
<dbReference type="KEGG" id="mbn:Mboo_2045"/>
<dbReference type="eggNOG" id="arCOG00091">
    <property type="taxonomic scope" value="Archaea"/>
</dbReference>
<dbReference type="HOGENOM" id="CLU_060476_0_0_2"/>
<dbReference type="OrthoDB" id="5817at2157"/>
<dbReference type="Proteomes" id="UP000002408">
    <property type="component" value="Chromosome"/>
</dbReference>
<dbReference type="GO" id="GO:0043766">
    <property type="term" value="F:Sep-tRNA:Cys-tRNA synthase activity"/>
    <property type="evidence" value="ECO:0007669"/>
    <property type="project" value="UniProtKB-UniRule"/>
</dbReference>
<dbReference type="GO" id="GO:0006412">
    <property type="term" value="P:translation"/>
    <property type="evidence" value="ECO:0007669"/>
    <property type="project" value="UniProtKB-KW"/>
</dbReference>
<dbReference type="Gene3D" id="3.90.1150.10">
    <property type="entry name" value="Aspartate Aminotransferase, domain 1"/>
    <property type="match status" value="1"/>
</dbReference>
<dbReference type="Gene3D" id="3.40.640.10">
    <property type="entry name" value="Type I PLP-dependent aspartate aminotransferase-like (Major domain)"/>
    <property type="match status" value="1"/>
</dbReference>
<dbReference type="HAMAP" id="MF_01675">
    <property type="entry name" value="Sep_Cys_tRNA_synth"/>
    <property type="match status" value="1"/>
</dbReference>
<dbReference type="InterPro" id="IPR015424">
    <property type="entry name" value="PyrdxlP-dep_Trfase"/>
</dbReference>
<dbReference type="InterPro" id="IPR015421">
    <property type="entry name" value="PyrdxlP-dep_Trfase_major"/>
</dbReference>
<dbReference type="InterPro" id="IPR015422">
    <property type="entry name" value="PyrdxlP-dep_Trfase_small"/>
</dbReference>
<dbReference type="InterPro" id="IPR013375">
    <property type="entry name" value="Sep_Cys-tRNA_synth_arc"/>
</dbReference>
<dbReference type="InterPro" id="IPR008829">
    <property type="entry name" value="SepSecS/SepCysS"/>
</dbReference>
<dbReference type="NCBIfam" id="NF006810">
    <property type="entry name" value="PRK09331.1"/>
    <property type="match status" value="1"/>
</dbReference>
<dbReference type="NCBIfam" id="TIGR02539">
    <property type="entry name" value="SepCysS"/>
    <property type="match status" value="1"/>
</dbReference>
<dbReference type="PANTHER" id="PTHR43586">
    <property type="entry name" value="CYSTEINE DESULFURASE"/>
    <property type="match status" value="1"/>
</dbReference>
<dbReference type="PANTHER" id="PTHR43586:SF3">
    <property type="entry name" value="O-PHOSPHO-L-SERYL-TRNA:CYS-TRNA SYNTHASE"/>
    <property type="match status" value="1"/>
</dbReference>
<dbReference type="Pfam" id="PF05889">
    <property type="entry name" value="SepSecS"/>
    <property type="match status" value="1"/>
</dbReference>
<dbReference type="SUPFAM" id="SSF53383">
    <property type="entry name" value="PLP-dependent transferases"/>
    <property type="match status" value="1"/>
</dbReference>
<sequence length="454" mass="50084">MSIRVQKTFEALFELEEIRGIFRDSLPTGLSAEEEAAFRQRIGNLKAIVADLEAGTGTPKVTKIAGTLDVRSREEQYINIHPIQAAGRLTTEARKAIISYGDGYSTCDACRKPFRLDKISKPGIAEFHADLAKWLNMDHARVVPGARRGFQAVTGTLVNKGDSVIVSALAHYTEFLSVENAGGVIKEVPLNAKNIVTGEATAQKIEEVKTETGKLPVLVMIDHFDYQFANEHEIREIGKVAHQYDIPFLYNGAYTVGVQPVDGKKIGADFVVGSGHKSMASVAPSGVLATTKEWAPKALRTTAIVGDLTKRKFGIKEVELLGCTLMGGTLLSMIASFPAVKERVLHWDEQVKRSNYFIDRLLKISGSRVLSEYPRRHTLTKVDTTGSFDTVAKTHKRRGFYFSDELSSRGIVGEFAGATRTWKLNTYGLSEKQVHYLADAFTEIAEKFELPVTK</sequence>